<dbReference type="EMBL" id="AP009240">
    <property type="protein sequence ID" value="BAG76544.1"/>
    <property type="molecule type" value="Genomic_DNA"/>
</dbReference>
<dbReference type="RefSeq" id="WP_000288710.1">
    <property type="nucleotide sequence ID" value="NC_011415.1"/>
</dbReference>
<dbReference type="SMR" id="B6I933"/>
<dbReference type="GeneID" id="93776456"/>
<dbReference type="KEGG" id="ecy:ECSE_1020"/>
<dbReference type="HOGENOM" id="CLU_118972_1_0_6"/>
<dbReference type="Proteomes" id="UP000008199">
    <property type="component" value="Chromosome"/>
</dbReference>
<dbReference type="GO" id="GO:0000917">
    <property type="term" value="P:division septum assembly"/>
    <property type="evidence" value="ECO:0007669"/>
    <property type="project" value="UniProtKB-KW"/>
</dbReference>
<dbReference type="GO" id="GO:0006281">
    <property type="term" value="P:DNA repair"/>
    <property type="evidence" value="ECO:0007669"/>
    <property type="project" value="TreeGrafter"/>
</dbReference>
<dbReference type="GO" id="GO:0051782">
    <property type="term" value="P:negative regulation of cell division"/>
    <property type="evidence" value="ECO:0007669"/>
    <property type="project" value="UniProtKB-UniRule"/>
</dbReference>
<dbReference type="GO" id="GO:0009432">
    <property type="term" value="P:SOS response"/>
    <property type="evidence" value="ECO:0007669"/>
    <property type="project" value="UniProtKB-UniRule"/>
</dbReference>
<dbReference type="FunFam" id="3.40.50.300:FF:000417">
    <property type="entry name" value="Cell division inhibitor SulA"/>
    <property type="match status" value="1"/>
</dbReference>
<dbReference type="Gene3D" id="3.40.50.300">
    <property type="entry name" value="P-loop containing nucleotide triphosphate hydrolases"/>
    <property type="match status" value="1"/>
</dbReference>
<dbReference type="HAMAP" id="MF_01179">
    <property type="entry name" value="SulA"/>
    <property type="match status" value="1"/>
</dbReference>
<dbReference type="InterPro" id="IPR004596">
    <property type="entry name" value="Cell_div_suppressor_SulA"/>
</dbReference>
<dbReference type="InterPro" id="IPR027417">
    <property type="entry name" value="P-loop_NTPase"/>
</dbReference>
<dbReference type="InterPro" id="IPR050356">
    <property type="entry name" value="SulA_CellDiv_inhibitor"/>
</dbReference>
<dbReference type="InterPro" id="IPR047696">
    <property type="entry name" value="SulA_enterobact"/>
</dbReference>
<dbReference type="NCBIfam" id="NF007892">
    <property type="entry name" value="PRK10595.1"/>
    <property type="match status" value="1"/>
</dbReference>
<dbReference type="NCBIfam" id="TIGR00623">
    <property type="entry name" value="SOS_SulA_coli"/>
    <property type="match status" value="1"/>
</dbReference>
<dbReference type="PANTHER" id="PTHR35369">
    <property type="entry name" value="BLR3025 PROTEIN-RELATED"/>
    <property type="match status" value="1"/>
</dbReference>
<dbReference type="PANTHER" id="PTHR35369:SF4">
    <property type="entry name" value="CELL DIVISION INHIBITOR SULA"/>
    <property type="match status" value="1"/>
</dbReference>
<dbReference type="Pfam" id="PF03846">
    <property type="entry name" value="SulA"/>
    <property type="match status" value="1"/>
</dbReference>
<dbReference type="PIRSF" id="PIRSF003093">
    <property type="entry name" value="SulA"/>
    <property type="match status" value="1"/>
</dbReference>
<dbReference type="SUPFAM" id="SSF52540">
    <property type="entry name" value="P-loop containing nucleoside triphosphate hydrolases"/>
    <property type="match status" value="1"/>
</dbReference>
<protein>
    <recommendedName>
        <fullName evidence="1">Cell division inhibitor SulA</fullName>
    </recommendedName>
</protein>
<evidence type="ECO:0000255" key="1">
    <source>
        <dbReference type="HAMAP-Rule" id="MF_01179"/>
    </source>
</evidence>
<name>SULA_ECOSE</name>
<comment type="function">
    <text evidence="1">Component of the SOS system and an inhibitor of cell division. Accumulation of SulA causes rapid cessation of cell division and the appearance of long, non-septate filaments. In the presence of GTP, binds a polymerization-competent form of FtsZ in a 1:1 ratio, thus inhibiting FtsZ polymerization and therefore preventing it from participating in the assembly of the Z ring. This mechanism prevents the premature segregation of damaged DNA to daughter cells during cell division.</text>
</comment>
<comment type="subunit">
    <text evidence="1">Interacts with FtsZ.</text>
</comment>
<comment type="induction">
    <text evidence="1">By DNA damage, as part of the SOS response.</text>
</comment>
<comment type="PTM">
    <text evidence="1">Is rapidly cleaved and degraded by the Lon protease once DNA damage is repaired.</text>
</comment>
<comment type="similarity">
    <text evidence="1">Belongs to the SulA family.</text>
</comment>
<proteinExistence type="inferred from homology"/>
<gene>
    <name evidence="1" type="primary">sulA</name>
    <name type="ordered locus">ECSE_1020</name>
</gene>
<sequence length="169" mass="18801">MYTSGYAHRSSSFSSAASKIARVSTENTTAGLISEVVYREDQPMMTQLLLLPLLQQLGQQSRWQLWLTPQQKLSREWVQASGLPLTKVMQISQLSPCHTVESMVRALRTGNYSVVIGWLADDLTEEEHAELVDAANEGNAMGFIMRPVSASSHATRQLSGLKIHSNLYH</sequence>
<feature type="chain" id="PRO_1000138161" description="Cell division inhibitor SulA">
    <location>
        <begin position="1"/>
        <end position="169"/>
    </location>
</feature>
<feature type="region of interest" description="FtsZ binding" evidence="1">
    <location>
        <begin position="106"/>
        <end position="112"/>
    </location>
</feature>
<feature type="region of interest" description="Lon protease binding" evidence="1">
    <location>
        <begin position="162"/>
        <end position="169"/>
    </location>
</feature>
<feature type="site" description="Essential for degradation by Lon protease" evidence="1">
    <location>
        <position position="169"/>
    </location>
</feature>
<keyword id="KW-0131">Cell cycle</keyword>
<keyword id="KW-0132">Cell division</keyword>
<keyword id="KW-0227">DNA damage</keyword>
<keyword id="KW-0717">Septation</keyword>
<keyword id="KW-0742">SOS response</keyword>
<accession>B6I933</accession>
<organism>
    <name type="scientific">Escherichia coli (strain SE11)</name>
    <dbReference type="NCBI Taxonomy" id="409438"/>
    <lineage>
        <taxon>Bacteria</taxon>
        <taxon>Pseudomonadati</taxon>
        <taxon>Pseudomonadota</taxon>
        <taxon>Gammaproteobacteria</taxon>
        <taxon>Enterobacterales</taxon>
        <taxon>Enterobacteriaceae</taxon>
        <taxon>Escherichia</taxon>
    </lineage>
</organism>
<reference key="1">
    <citation type="journal article" date="2008" name="DNA Res.">
        <title>Complete genome sequence and comparative analysis of the wild-type commensal Escherichia coli strain SE11 isolated from a healthy adult.</title>
        <authorList>
            <person name="Oshima K."/>
            <person name="Toh H."/>
            <person name="Ogura Y."/>
            <person name="Sasamoto H."/>
            <person name="Morita H."/>
            <person name="Park S.-H."/>
            <person name="Ooka T."/>
            <person name="Iyoda S."/>
            <person name="Taylor T.D."/>
            <person name="Hayashi T."/>
            <person name="Itoh K."/>
            <person name="Hattori M."/>
        </authorList>
    </citation>
    <scope>NUCLEOTIDE SEQUENCE [LARGE SCALE GENOMIC DNA]</scope>
    <source>
        <strain>SE11</strain>
    </source>
</reference>